<name>OBG_STRPF</name>
<sequence length="437" mass="48365">MSMFLDTAKISVQAGRGGDGMVAFRREKYVPNGGPWGGDGGKGGSVIFRVDEGLRTLMDFRYNRKFKAKSGEKGMTKGMHGRGAEDLIVFVPQGTTVRDAETGKVITDLVEHGQEVVIAKGGRGGRGNIRFATPRNPAPEIAENGEPGEERQLELELKILADVGLVGFPSVGKSTLLSVVSSAKPKIGAYHFTTIVPNLGMVRTKSGDSFAMADLPGLIEGASQGIGLGTQFLRHIERTRVILHVIDMSASEGRDPYEDYVSINNELETYNLRLMERPQIIVANKMDMPEAQENLKAFKKKLAAQYDEFDDLPMIFPISSLAHQGLENLLEATAELLAKTDEFLLYDEADLVDEEAYYGFAETEKDFEITRDDDATWVLSGEKLERLFVMTNMERDESIMKFARQLRGMGVDEALRERGAKDGDLVRIGKFEFEFVD</sequence>
<dbReference type="EC" id="3.6.5.-" evidence="1"/>
<dbReference type="EMBL" id="CP000262">
    <property type="protein sequence ID" value="ABF38131.1"/>
    <property type="molecule type" value="Genomic_DNA"/>
</dbReference>
<dbReference type="SMR" id="Q1J652"/>
<dbReference type="KEGG" id="spi:MGAS10750_Spy1181"/>
<dbReference type="HOGENOM" id="CLU_011747_2_1_9"/>
<dbReference type="Proteomes" id="UP000002434">
    <property type="component" value="Chromosome"/>
</dbReference>
<dbReference type="GO" id="GO:0005737">
    <property type="term" value="C:cytoplasm"/>
    <property type="evidence" value="ECO:0007669"/>
    <property type="project" value="UniProtKB-SubCell"/>
</dbReference>
<dbReference type="GO" id="GO:0005525">
    <property type="term" value="F:GTP binding"/>
    <property type="evidence" value="ECO:0007669"/>
    <property type="project" value="UniProtKB-UniRule"/>
</dbReference>
<dbReference type="GO" id="GO:0003924">
    <property type="term" value="F:GTPase activity"/>
    <property type="evidence" value="ECO:0007669"/>
    <property type="project" value="UniProtKB-UniRule"/>
</dbReference>
<dbReference type="GO" id="GO:0000287">
    <property type="term" value="F:magnesium ion binding"/>
    <property type="evidence" value="ECO:0007669"/>
    <property type="project" value="InterPro"/>
</dbReference>
<dbReference type="GO" id="GO:0042254">
    <property type="term" value="P:ribosome biogenesis"/>
    <property type="evidence" value="ECO:0007669"/>
    <property type="project" value="UniProtKB-UniRule"/>
</dbReference>
<dbReference type="CDD" id="cd01898">
    <property type="entry name" value="Obg"/>
    <property type="match status" value="1"/>
</dbReference>
<dbReference type="FunFam" id="2.70.210.12:FF:000001">
    <property type="entry name" value="GTPase Obg"/>
    <property type="match status" value="1"/>
</dbReference>
<dbReference type="FunFam" id="3.40.50.300:FF:000515">
    <property type="entry name" value="GTPase Obg"/>
    <property type="match status" value="1"/>
</dbReference>
<dbReference type="Gene3D" id="3.30.300.350">
    <property type="entry name" value="GTP-binding protein OBG, C-terminal domain"/>
    <property type="match status" value="1"/>
</dbReference>
<dbReference type="Gene3D" id="2.70.210.12">
    <property type="entry name" value="GTP1/OBG domain"/>
    <property type="match status" value="1"/>
</dbReference>
<dbReference type="Gene3D" id="3.40.50.300">
    <property type="entry name" value="P-loop containing nucleotide triphosphate hydrolases"/>
    <property type="match status" value="1"/>
</dbReference>
<dbReference type="HAMAP" id="MF_01454">
    <property type="entry name" value="GTPase_Obg"/>
    <property type="match status" value="1"/>
</dbReference>
<dbReference type="InterPro" id="IPR031167">
    <property type="entry name" value="G_OBG"/>
</dbReference>
<dbReference type="InterPro" id="IPR006073">
    <property type="entry name" value="GTP-bd"/>
</dbReference>
<dbReference type="InterPro" id="IPR014100">
    <property type="entry name" value="GTP-bd_Obg/CgtA"/>
</dbReference>
<dbReference type="InterPro" id="IPR036346">
    <property type="entry name" value="GTP-bd_prot_GTP1/OBG_C_sf"/>
</dbReference>
<dbReference type="InterPro" id="IPR006074">
    <property type="entry name" value="GTP1-OBG_CS"/>
</dbReference>
<dbReference type="InterPro" id="IPR006169">
    <property type="entry name" value="GTP1_OBG_dom"/>
</dbReference>
<dbReference type="InterPro" id="IPR036726">
    <property type="entry name" value="GTP1_OBG_dom_sf"/>
</dbReference>
<dbReference type="InterPro" id="IPR045086">
    <property type="entry name" value="OBG_GTPase"/>
</dbReference>
<dbReference type="InterPro" id="IPR015349">
    <property type="entry name" value="OCT_dom"/>
</dbReference>
<dbReference type="InterPro" id="IPR027417">
    <property type="entry name" value="P-loop_NTPase"/>
</dbReference>
<dbReference type="InterPro" id="IPR005225">
    <property type="entry name" value="Small_GTP-bd"/>
</dbReference>
<dbReference type="NCBIfam" id="TIGR02729">
    <property type="entry name" value="Obg_CgtA"/>
    <property type="match status" value="1"/>
</dbReference>
<dbReference type="NCBIfam" id="TIGR03595">
    <property type="entry name" value="Obg_CgtA_exten"/>
    <property type="match status" value="1"/>
</dbReference>
<dbReference type="NCBIfam" id="NF008954">
    <property type="entry name" value="PRK12296.1"/>
    <property type="match status" value="1"/>
</dbReference>
<dbReference type="NCBIfam" id="NF008955">
    <property type="entry name" value="PRK12297.1"/>
    <property type="match status" value="1"/>
</dbReference>
<dbReference type="NCBIfam" id="NF008956">
    <property type="entry name" value="PRK12299.1"/>
    <property type="match status" value="1"/>
</dbReference>
<dbReference type="NCBIfam" id="TIGR00231">
    <property type="entry name" value="small_GTP"/>
    <property type="match status" value="1"/>
</dbReference>
<dbReference type="PANTHER" id="PTHR11702">
    <property type="entry name" value="DEVELOPMENTALLY REGULATED GTP-BINDING PROTEIN-RELATED"/>
    <property type="match status" value="1"/>
</dbReference>
<dbReference type="PANTHER" id="PTHR11702:SF31">
    <property type="entry name" value="MITOCHONDRIAL RIBOSOME-ASSOCIATED GTPASE 2"/>
    <property type="match status" value="1"/>
</dbReference>
<dbReference type="Pfam" id="PF09269">
    <property type="entry name" value="DUF1967"/>
    <property type="match status" value="1"/>
</dbReference>
<dbReference type="Pfam" id="PF01018">
    <property type="entry name" value="GTP1_OBG"/>
    <property type="match status" value="1"/>
</dbReference>
<dbReference type="Pfam" id="PF01926">
    <property type="entry name" value="MMR_HSR1"/>
    <property type="match status" value="1"/>
</dbReference>
<dbReference type="PIRSF" id="PIRSF002401">
    <property type="entry name" value="GTP_bd_Obg/CgtA"/>
    <property type="match status" value="1"/>
</dbReference>
<dbReference type="PRINTS" id="PR00326">
    <property type="entry name" value="GTP1OBG"/>
</dbReference>
<dbReference type="SUPFAM" id="SSF102741">
    <property type="entry name" value="Obg GTP-binding protein C-terminal domain"/>
    <property type="match status" value="1"/>
</dbReference>
<dbReference type="SUPFAM" id="SSF82051">
    <property type="entry name" value="Obg GTP-binding protein N-terminal domain"/>
    <property type="match status" value="1"/>
</dbReference>
<dbReference type="SUPFAM" id="SSF52540">
    <property type="entry name" value="P-loop containing nucleoside triphosphate hydrolases"/>
    <property type="match status" value="1"/>
</dbReference>
<dbReference type="PROSITE" id="PS51710">
    <property type="entry name" value="G_OBG"/>
    <property type="match status" value="1"/>
</dbReference>
<dbReference type="PROSITE" id="PS00905">
    <property type="entry name" value="GTP1_OBG"/>
    <property type="match status" value="1"/>
</dbReference>
<dbReference type="PROSITE" id="PS51883">
    <property type="entry name" value="OBG"/>
    <property type="match status" value="1"/>
</dbReference>
<dbReference type="PROSITE" id="PS51881">
    <property type="entry name" value="OCT"/>
    <property type="match status" value="1"/>
</dbReference>
<gene>
    <name evidence="1" type="primary">obg</name>
    <name type="ordered locus">MGAS10750_Spy1181</name>
</gene>
<keyword id="KW-0963">Cytoplasm</keyword>
<keyword id="KW-0342">GTP-binding</keyword>
<keyword id="KW-0378">Hydrolase</keyword>
<keyword id="KW-0460">Magnesium</keyword>
<keyword id="KW-0479">Metal-binding</keyword>
<keyword id="KW-0547">Nucleotide-binding</keyword>
<reference key="1">
    <citation type="journal article" date="2006" name="Proc. Natl. Acad. Sci. U.S.A.">
        <title>Molecular genetic anatomy of inter- and intraserotype variation in the human bacterial pathogen group A Streptococcus.</title>
        <authorList>
            <person name="Beres S.B."/>
            <person name="Richter E.W."/>
            <person name="Nagiec M.J."/>
            <person name="Sumby P."/>
            <person name="Porcella S.F."/>
            <person name="DeLeo F.R."/>
            <person name="Musser J.M."/>
        </authorList>
    </citation>
    <scope>NUCLEOTIDE SEQUENCE [LARGE SCALE GENOMIC DNA]</scope>
    <source>
        <strain>MGAS10750</strain>
    </source>
</reference>
<organism>
    <name type="scientific">Streptococcus pyogenes serotype M4 (strain MGAS10750)</name>
    <dbReference type="NCBI Taxonomy" id="370554"/>
    <lineage>
        <taxon>Bacteria</taxon>
        <taxon>Bacillati</taxon>
        <taxon>Bacillota</taxon>
        <taxon>Bacilli</taxon>
        <taxon>Lactobacillales</taxon>
        <taxon>Streptococcaceae</taxon>
        <taxon>Streptococcus</taxon>
    </lineage>
</organism>
<feature type="chain" id="PRO_0000386311" description="GTPase Obg">
    <location>
        <begin position="1"/>
        <end position="437"/>
    </location>
</feature>
<feature type="domain" description="Obg" evidence="3">
    <location>
        <begin position="2"/>
        <end position="160"/>
    </location>
</feature>
<feature type="domain" description="OBG-type G" evidence="1">
    <location>
        <begin position="161"/>
        <end position="338"/>
    </location>
</feature>
<feature type="domain" description="OCT" evidence="2">
    <location>
        <begin position="359"/>
        <end position="437"/>
    </location>
</feature>
<feature type="binding site" evidence="1">
    <location>
        <begin position="167"/>
        <end position="174"/>
    </location>
    <ligand>
        <name>GTP</name>
        <dbReference type="ChEBI" id="CHEBI:37565"/>
    </ligand>
</feature>
<feature type="binding site" evidence="1">
    <location>
        <position position="174"/>
    </location>
    <ligand>
        <name>Mg(2+)</name>
        <dbReference type="ChEBI" id="CHEBI:18420"/>
    </ligand>
</feature>
<feature type="binding site" evidence="1">
    <location>
        <begin position="192"/>
        <end position="196"/>
    </location>
    <ligand>
        <name>GTP</name>
        <dbReference type="ChEBI" id="CHEBI:37565"/>
    </ligand>
</feature>
<feature type="binding site" evidence="1">
    <location>
        <position position="194"/>
    </location>
    <ligand>
        <name>Mg(2+)</name>
        <dbReference type="ChEBI" id="CHEBI:18420"/>
    </ligand>
</feature>
<feature type="binding site" evidence="1">
    <location>
        <begin position="214"/>
        <end position="217"/>
    </location>
    <ligand>
        <name>GTP</name>
        <dbReference type="ChEBI" id="CHEBI:37565"/>
    </ligand>
</feature>
<feature type="binding site" evidence="1">
    <location>
        <begin position="284"/>
        <end position="287"/>
    </location>
    <ligand>
        <name>GTP</name>
        <dbReference type="ChEBI" id="CHEBI:37565"/>
    </ligand>
</feature>
<feature type="binding site" evidence="1">
    <location>
        <begin position="319"/>
        <end position="321"/>
    </location>
    <ligand>
        <name>GTP</name>
        <dbReference type="ChEBI" id="CHEBI:37565"/>
    </ligand>
</feature>
<accession>Q1J652</accession>
<proteinExistence type="inferred from homology"/>
<protein>
    <recommendedName>
        <fullName evidence="1">GTPase Obg</fullName>
        <ecNumber evidence="1">3.6.5.-</ecNumber>
    </recommendedName>
    <alternativeName>
        <fullName evidence="1">GTP-binding protein Obg</fullName>
    </alternativeName>
</protein>
<evidence type="ECO:0000255" key="1">
    <source>
        <dbReference type="HAMAP-Rule" id="MF_01454"/>
    </source>
</evidence>
<evidence type="ECO:0000255" key="2">
    <source>
        <dbReference type="PROSITE-ProRule" id="PRU01229"/>
    </source>
</evidence>
<evidence type="ECO:0000255" key="3">
    <source>
        <dbReference type="PROSITE-ProRule" id="PRU01231"/>
    </source>
</evidence>
<comment type="function">
    <text evidence="1">An essential GTPase which binds GTP, GDP and possibly (p)ppGpp with moderate affinity, with high nucleotide exchange rates and a fairly low GTP hydrolysis rate. Plays a role in control of the cell cycle, stress response, ribosome biogenesis and in those bacteria that undergo differentiation, in morphogenesis control.</text>
</comment>
<comment type="cofactor">
    <cofactor evidence="1">
        <name>Mg(2+)</name>
        <dbReference type="ChEBI" id="CHEBI:18420"/>
    </cofactor>
</comment>
<comment type="subunit">
    <text evidence="1">Monomer.</text>
</comment>
<comment type="subcellular location">
    <subcellularLocation>
        <location evidence="1">Cytoplasm</location>
    </subcellularLocation>
</comment>
<comment type="similarity">
    <text evidence="1">Belongs to the TRAFAC class OBG-HflX-like GTPase superfamily. OBG GTPase family.</text>
</comment>